<keyword id="KW-0030">Aminoacyl-tRNA synthetase</keyword>
<keyword id="KW-0067">ATP-binding</keyword>
<keyword id="KW-0963">Cytoplasm</keyword>
<keyword id="KW-0436">Ligase</keyword>
<keyword id="KW-0547">Nucleotide-binding</keyword>
<keyword id="KW-0648">Protein biosynthesis</keyword>
<sequence length="577" mass="64293">MNIQTLLNQRIQAAMVAAGASDTAQALVRQSAKVQFGDYQANGIMGAAKALKMNPCDFAQATLDKLDLSDLAEKVEIAGPGFINIFLKNVWLSKELTQLRTSERLDVNPVDAPETVVVDYSSPNLAKEMHVGHLRSTVIGDAVVRTLEFFGHHVVRQNHVGDWGTQFGMLLAYMERLRSENATISMALSDLETFYRAAKTCFDEDEAFATRSRELVVALQSGDEECLALWDEFINISLTHCEETYKMLGVSLERQHVMPESAYNDDLANVVNELKEQGLLQESNGAQCVFMEEFANKEGEITPIIVQKTGGGFLYATTDLAAVRFRQHTLNANRVLYFVDARQSLHFQQIFTLSRKAGFVKPETQLEHMPFGTVMGSDGKPFKTRSGGVAKLSSLLEEAQERAYQLVASKNPEMDEEELRNIGRVVGIASVKYADLSKNRTSDYVFNWDSMLSFEGNTAPYLLYAYSRVASIVKRSEIDVVNLTGEISIDEPQERALAVKLCQFEEAIQQVANDGMPHFLCAYLYDLAGTFMTFYEACPILNAEDEVKHSRLQLALNTASTLKLGLSLLGIETLERM</sequence>
<accession>A6W2V1</accession>
<gene>
    <name evidence="1" type="primary">argS</name>
    <name type="ordered locus">Mmwyl1_4134</name>
</gene>
<evidence type="ECO:0000255" key="1">
    <source>
        <dbReference type="HAMAP-Rule" id="MF_00123"/>
    </source>
</evidence>
<name>SYR_MARMS</name>
<proteinExistence type="inferred from homology"/>
<organism>
    <name type="scientific">Marinomonas sp. (strain MWYL1)</name>
    <dbReference type="NCBI Taxonomy" id="400668"/>
    <lineage>
        <taxon>Bacteria</taxon>
        <taxon>Pseudomonadati</taxon>
        <taxon>Pseudomonadota</taxon>
        <taxon>Gammaproteobacteria</taxon>
        <taxon>Oceanospirillales</taxon>
        <taxon>Oceanospirillaceae</taxon>
        <taxon>Marinomonas</taxon>
    </lineage>
</organism>
<dbReference type="EC" id="6.1.1.19" evidence="1"/>
<dbReference type="EMBL" id="CP000749">
    <property type="protein sequence ID" value="ABR73030.1"/>
    <property type="molecule type" value="Genomic_DNA"/>
</dbReference>
<dbReference type="SMR" id="A6W2V1"/>
<dbReference type="STRING" id="400668.Mmwyl1_4134"/>
<dbReference type="KEGG" id="mmw:Mmwyl1_4134"/>
<dbReference type="eggNOG" id="COG0018">
    <property type="taxonomic scope" value="Bacteria"/>
</dbReference>
<dbReference type="HOGENOM" id="CLU_006406_5_1_6"/>
<dbReference type="OrthoDB" id="9803211at2"/>
<dbReference type="GO" id="GO:0005737">
    <property type="term" value="C:cytoplasm"/>
    <property type="evidence" value="ECO:0007669"/>
    <property type="project" value="UniProtKB-SubCell"/>
</dbReference>
<dbReference type="GO" id="GO:0004814">
    <property type="term" value="F:arginine-tRNA ligase activity"/>
    <property type="evidence" value="ECO:0007669"/>
    <property type="project" value="UniProtKB-UniRule"/>
</dbReference>
<dbReference type="GO" id="GO:0005524">
    <property type="term" value="F:ATP binding"/>
    <property type="evidence" value="ECO:0007669"/>
    <property type="project" value="UniProtKB-UniRule"/>
</dbReference>
<dbReference type="GO" id="GO:0006420">
    <property type="term" value="P:arginyl-tRNA aminoacylation"/>
    <property type="evidence" value="ECO:0007669"/>
    <property type="project" value="UniProtKB-UniRule"/>
</dbReference>
<dbReference type="CDD" id="cd07956">
    <property type="entry name" value="Anticodon_Ia_Arg"/>
    <property type="match status" value="1"/>
</dbReference>
<dbReference type="CDD" id="cd00671">
    <property type="entry name" value="ArgRS_core"/>
    <property type="match status" value="1"/>
</dbReference>
<dbReference type="FunFam" id="3.40.50.620:FF:000030">
    <property type="entry name" value="Arginine--tRNA ligase"/>
    <property type="match status" value="1"/>
</dbReference>
<dbReference type="FunFam" id="1.10.730.10:FF:000006">
    <property type="entry name" value="Arginyl-tRNA synthetase 2, mitochondrial"/>
    <property type="match status" value="1"/>
</dbReference>
<dbReference type="Gene3D" id="3.30.1360.70">
    <property type="entry name" value="Arginyl tRNA synthetase N-terminal domain"/>
    <property type="match status" value="1"/>
</dbReference>
<dbReference type="Gene3D" id="3.40.50.620">
    <property type="entry name" value="HUPs"/>
    <property type="match status" value="1"/>
</dbReference>
<dbReference type="Gene3D" id="1.10.730.10">
    <property type="entry name" value="Isoleucyl-tRNA Synthetase, Domain 1"/>
    <property type="match status" value="1"/>
</dbReference>
<dbReference type="HAMAP" id="MF_00123">
    <property type="entry name" value="Arg_tRNA_synth"/>
    <property type="match status" value="1"/>
</dbReference>
<dbReference type="InterPro" id="IPR001412">
    <property type="entry name" value="aa-tRNA-synth_I_CS"/>
</dbReference>
<dbReference type="InterPro" id="IPR001278">
    <property type="entry name" value="Arg-tRNA-ligase"/>
</dbReference>
<dbReference type="InterPro" id="IPR005148">
    <property type="entry name" value="Arg-tRNA-synth_N"/>
</dbReference>
<dbReference type="InterPro" id="IPR036695">
    <property type="entry name" value="Arg-tRNA-synth_N_sf"/>
</dbReference>
<dbReference type="InterPro" id="IPR035684">
    <property type="entry name" value="ArgRS_core"/>
</dbReference>
<dbReference type="InterPro" id="IPR008909">
    <property type="entry name" value="DALR_anticod-bd"/>
</dbReference>
<dbReference type="InterPro" id="IPR014729">
    <property type="entry name" value="Rossmann-like_a/b/a_fold"/>
</dbReference>
<dbReference type="InterPro" id="IPR009080">
    <property type="entry name" value="tRNAsynth_Ia_anticodon-bd"/>
</dbReference>
<dbReference type="NCBIfam" id="TIGR00456">
    <property type="entry name" value="argS"/>
    <property type="match status" value="1"/>
</dbReference>
<dbReference type="PANTHER" id="PTHR11956:SF5">
    <property type="entry name" value="ARGININE--TRNA LIGASE, CYTOPLASMIC"/>
    <property type="match status" value="1"/>
</dbReference>
<dbReference type="PANTHER" id="PTHR11956">
    <property type="entry name" value="ARGINYL-TRNA SYNTHETASE"/>
    <property type="match status" value="1"/>
</dbReference>
<dbReference type="Pfam" id="PF03485">
    <property type="entry name" value="Arg_tRNA_synt_N"/>
    <property type="match status" value="1"/>
</dbReference>
<dbReference type="Pfam" id="PF05746">
    <property type="entry name" value="DALR_1"/>
    <property type="match status" value="1"/>
</dbReference>
<dbReference type="Pfam" id="PF00750">
    <property type="entry name" value="tRNA-synt_1d"/>
    <property type="match status" value="1"/>
</dbReference>
<dbReference type="PRINTS" id="PR01038">
    <property type="entry name" value="TRNASYNTHARG"/>
</dbReference>
<dbReference type="SMART" id="SM01016">
    <property type="entry name" value="Arg_tRNA_synt_N"/>
    <property type="match status" value="1"/>
</dbReference>
<dbReference type="SMART" id="SM00836">
    <property type="entry name" value="DALR_1"/>
    <property type="match status" value="1"/>
</dbReference>
<dbReference type="SUPFAM" id="SSF47323">
    <property type="entry name" value="Anticodon-binding domain of a subclass of class I aminoacyl-tRNA synthetases"/>
    <property type="match status" value="1"/>
</dbReference>
<dbReference type="SUPFAM" id="SSF55190">
    <property type="entry name" value="Arginyl-tRNA synthetase (ArgRS), N-terminal 'additional' domain"/>
    <property type="match status" value="1"/>
</dbReference>
<dbReference type="SUPFAM" id="SSF52374">
    <property type="entry name" value="Nucleotidylyl transferase"/>
    <property type="match status" value="1"/>
</dbReference>
<dbReference type="PROSITE" id="PS00178">
    <property type="entry name" value="AA_TRNA_LIGASE_I"/>
    <property type="match status" value="1"/>
</dbReference>
<comment type="catalytic activity">
    <reaction evidence="1">
        <text>tRNA(Arg) + L-arginine + ATP = L-arginyl-tRNA(Arg) + AMP + diphosphate</text>
        <dbReference type="Rhea" id="RHEA:20301"/>
        <dbReference type="Rhea" id="RHEA-COMP:9658"/>
        <dbReference type="Rhea" id="RHEA-COMP:9673"/>
        <dbReference type="ChEBI" id="CHEBI:30616"/>
        <dbReference type="ChEBI" id="CHEBI:32682"/>
        <dbReference type="ChEBI" id="CHEBI:33019"/>
        <dbReference type="ChEBI" id="CHEBI:78442"/>
        <dbReference type="ChEBI" id="CHEBI:78513"/>
        <dbReference type="ChEBI" id="CHEBI:456215"/>
        <dbReference type="EC" id="6.1.1.19"/>
    </reaction>
</comment>
<comment type="subunit">
    <text evidence="1">Monomer.</text>
</comment>
<comment type="subcellular location">
    <subcellularLocation>
        <location evidence="1">Cytoplasm</location>
    </subcellularLocation>
</comment>
<comment type="similarity">
    <text evidence="1">Belongs to the class-I aminoacyl-tRNA synthetase family.</text>
</comment>
<protein>
    <recommendedName>
        <fullName evidence="1">Arginine--tRNA ligase</fullName>
        <ecNumber evidence="1">6.1.1.19</ecNumber>
    </recommendedName>
    <alternativeName>
        <fullName evidence="1">Arginyl-tRNA synthetase</fullName>
        <shortName evidence="1">ArgRS</shortName>
    </alternativeName>
</protein>
<reference key="1">
    <citation type="submission" date="2007-06" db="EMBL/GenBank/DDBJ databases">
        <title>Complete sequence of Marinomonas sp. MWYL1.</title>
        <authorList>
            <consortium name="US DOE Joint Genome Institute"/>
            <person name="Copeland A."/>
            <person name="Lucas S."/>
            <person name="Lapidus A."/>
            <person name="Barry K."/>
            <person name="Glavina del Rio T."/>
            <person name="Dalin E."/>
            <person name="Tice H."/>
            <person name="Pitluck S."/>
            <person name="Kiss H."/>
            <person name="Brettin T."/>
            <person name="Bruce D."/>
            <person name="Detter J.C."/>
            <person name="Han C."/>
            <person name="Schmutz J."/>
            <person name="Larimer F."/>
            <person name="Land M."/>
            <person name="Hauser L."/>
            <person name="Kyrpides N."/>
            <person name="Kim E."/>
            <person name="Johnston A.W.B."/>
            <person name="Todd J.D."/>
            <person name="Rogers R."/>
            <person name="Wexler M."/>
            <person name="Bond P.L."/>
            <person name="Li Y."/>
            <person name="Richardson P."/>
        </authorList>
    </citation>
    <scope>NUCLEOTIDE SEQUENCE [LARGE SCALE GENOMIC DNA]</scope>
    <source>
        <strain>MWYL1</strain>
    </source>
</reference>
<feature type="chain" id="PRO_1000076220" description="Arginine--tRNA ligase">
    <location>
        <begin position="1"/>
        <end position="577"/>
    </location>
</feature>
<feature type="short sequence motif" description="'HIGH' region">
    <location>
        <begin position="123"/>
        <end position="133"/>
    </location>
</feature>